<gene>
    <name type="primary">ODF2</name>
    <name type="ORF">RCJMB04_10e12</name>
</gene>
<proteinExistence type="evidence at transcript level"/>
<reference key="1">
    <citation type="journal article" date="2005" name="Genome Biol.">
        <title>Full-length cDNAs from chicken bursal lymphocytes to facilitate gene function analysis.</title>
        <authorList>
            <person name="Caldwell R.B."/>
            <person name="Kierzek A.M."/>
            <person name="Arakawa H."/>
            <person name="Bezzubov Y."/>
            <person name="Zaim J."/>
            <person name="Fiedler P."/>
            <person name="Kutter S."/>
            <person name="Blagodatski A."/>
            <person name="Kostovska D."/>
            <person name="Koter M."/>
            <person name="Plachy J."/>
            <person name="Carninci P."/>
            <person name="Hayashizaki Y."/>
            <person name="Buerstedde J.-M."/>
        </authorList>
    </citation>
    <scope>NUCLEOTIDE SEQUENCE [LARGE SCALE MRNA]</scope>
    <source>
        <strain>CB</strain>
        <tissue>Bursa of Fabricius</tissue>
    </source>
</reference>
<sequence>MKNRSSSPPLHVHVDENTPVHVHIKKGQKTTPAKCQQKHKQKMKGNTVNVRRAVQVKTKAPWMPPGKTSVLDSTYKWEGPTHLLEITPPESEKMMSVLRLSDLSTDEEDAVCCKMNEYERKIDSLMNVVGTLKNEAKLQKQEQRQQMTKRLLEEQKEELNEVTQELAESEHENTLLRRNIERMREEKDLTMLQKKYLQHEKECLLSKLSEAERDGAAAAREIHALKSTIERLNVEKHMSSSDINMLTRQKELLLQKLSTFEETNRTLRELLREQHERERDVQKILEKQGVLMKMLADSDAEKLQLQMRLQDKEKEINNLAVQIQEEKEQARTASELSKSLESVRGHLQAQLRHKEAENNRLTTQIRNLERSEAQHKAEVECIKDQLKELRQKADRDKDALKRALRAQKERAERSEECAGQLAVQLAEKDSYVAEALSTLESWRSRYNKVVKDKSDLELEMVTVNSRIADLLEQQATLEDKMREDRDALMDKLHQQTTETTSFRMENERLKASVVPMEEKLNQAHVEVQQLKSSVRNYEDLIETYKSQVLKTRMEAADVAAKLEKCDNEKKALKDEMNKELELARKQFQSQLAELEKLPEILRITETQLAECQDQLQSYEKKNMDLSVMIADLRQRIELQGDKMEMTRERYQSAQEEKKQLTLKAEELERKLETTSTQNIEFLQVIAKREESIHQCQLRLEEKTRECSSLARQLEMAIEDAKREVEQTRERATSRERAAQSKVLDLETQLSRTKTELNQLRRNKEDAERRYESRLQDLKDRLEQSESTNRSMQNYVQFLKSSYANVFADSALLGSPGRSRSSP</sequence>
<dbReference type="EMBL" id="AJ720079">
    <property type="protein sequence ID" value="CAG31738.1"/>
    <property type="molecule type" value="mRNA"/>
</dbReference>
<dbReference type="RefSeq" id="NP_001012817.1">
    <property type="nucleotide sequence ID" value="NM_001012799.1"/>
</dbReference>
<dbReference type="SMR" id="Q5ZKK5"/>
<dbReference type="FunCoup" id="Q5ZKK5">
    <property type="interactions" value="870"/>
</dbReference>
<dbReference type="STRING" id="9031.ENSGALP00000007591"/>
<dbReference type="PaxDb" id="9031-ENSGALP00000007591"/>
<dbReference type="GeneID" id="417213"/>
<dbReference type="KEGG" id="gga:417213"/>
<dbReference type="CTD" id="4957"/>
<dbReference type="VEuPathDB" id="HostDB:geneid_417213"/>
<dbReference type="eggNOG" id="ENOG502QUXQ">
    <property type="taxonomic scope" value="Eukaryota"/>
</dbReference>
<dbReference type="InParanoid" id="Q5ZKK5"/>
<dbReference type="OrthoDB" id="413404at2759"/>
<dbReference type="PhylomeDB" id="Q5ZKK5"/>
<dbReference type="PRO" id="PR:Q5ZKK5"/>
<dbReference type="Proteomes" id="UP000000539">
    <property type="component" value="Unassembled WGS sequence"/>
</dbReference>
<dbReference type="GO" id="GO:0005814">
    <property type="term" value="C:centriole"/>
    <property type="evidence" value="ECO:0007669"/>
    <property type="project" value="UniProtKB-SubCell"/>
</dbReference>
<dbReference type="GO" id="GO:0005813">
    <property type="term" value="C:centrosome"/>
    <property type="evidence" value="ECO:0000318"/>
    <property type="project" value="GO_Central"/>
</dbReference>
<dbReference type="GO" id="GO:0005737">
    <property type="term" value="C:cytoplasm"/>
    <property type="evidence" value="ECO:0007669"/>
    <property type="project" value="UniProtKB-KW"/>
</dbReference>
<dbReference type="GO" id="GO:0005874">
    <property type="term" value="C:microtubule"/>
    <property type="evidence" value="ECO:0007669"/>
    <property type="project" value="UniProtKB-KW"/>
</dbReference>
<dbReference type="GO" id="GO:0036126">
    <property type="term" value="C:sperm flagellum"/>
    <property type="evidence" value="ECO:0000250"/>
    <property type="project" value="UniProtKB"/>
</dbReference>
<dbReference type="GO" id="GO:0000922">
    <property type="term" value="C:spindle pole"/>
    <property type="evidence" value="ECO:0007669"/>
    <property type="project" value="UniProtKB-SubCell"/>
</dbReference>
<dbReference type="GO" id="GO:0030154">
    <property type="term" value="P:cell differentiation"/>
    <property type="evidence" value="ECO:0007669"/>
    <property type="project" value="UniProtKB-KW"/>
</dbReference>
<dbReference type="GO" id="GO:1902017">
    <property type="term" value="P:regulation of cilium assembly"/>
    <property type="evidence" value="ECO:0000318"/>
    <property type="project" value="GO_Central"/>
</dbReference>
<dbReference type="GO" id="GO:0007283">
    <property type="term" value="P:spermatogenesis"/>
    <property type="evidence" value="ECO:0007669"/>
    <property type="project" value="UniProtKB-KW"/>
</dbReference>
<dbReference type="InterPro" id="IPR026099">
    <property type="entry name" value="Odf2-rel"/>
</dbReference>
<dbReference type="PANTHER" id="PTHR23162">
    <property type="entry name" value="OUTER DENSE FIBER OF SPERM TAILS 2"/>
    <property type="match status" value="1"/>
</dbReference>
<dbReference type="PANTHER" id="PTHR23162:SF8">
    <property type="entry name" value="OUTER DENSE FIBER PROTEIN 2"/>
    <property type="match status" value="1"/>
</dbReference>
<evidence type="ECO:0000250" key="1">
    <source>
        <dbReference type="UniProtKB" id="A3KGV1"/>
    </source>
</evidence>
<evidence type="ECO:0000250" key="2">
    <source>
        <dbReference type="UniProtKB" id="Q5BJF6"/>
    </source>
</evidence>
<evidence type="ECO:0000255" key="3"/>
<evidence type="ECO:0000256" key="4">
    <source>
        <dbReference type="SAM" id="MobiDB-lite"/>
    </source>
</evidence>
<evidence type="ECO:0000305" key="5"/>
<keyword id="KW-0966">Cell projection</keyword>
<keyword id="KW-0969">Cilium</keyword>
<keyword id="KW-0175">Coiled coil</keyword>
<keyword id="KW-0963">Cytoplasm</keyword>
<keyword id="KW-0206">Cytoskeleton</keyword>
<keyword id="KW-0217">Developmental protein</keyword>
<keyword id="KW-0221">Differentiation</keyword>
<keyword id="KW-0282">Flagellum</keyword>
<keyword id="KW-0493">Microtubule</keyword>
<keyword id="KW-1185">Reference proteome</keyword>
<keyword id="KW-0744">Spermatogenesis</keyword>
<name>ODFP2_CHICK</name>
<accession>Q5ZKK5</accession>
<organism>
    <name type="scientific">Gallus gallus</name>
    <name type="common">Chicken</name>
    <dbReference type="NCBI Taxonomy" id="9031"/>
    <lineage>
        <taxon>Eukaryota</taxon>
        <taxon>Metazoa</taxon>
        <taxon>Chordata</taxon>
        <taxon>Craniata</taxon>
        <taxon>Vertebrata</taxon>
        <taxon>Euteleostomi</taxon>
        <taxon>Archelosauria</taxon>
        <taxon>Archosauria</taxon>
        <taxon>Dinosauria</taxon>
        <taxon>Saurischia</taxon>
        <taxon>Theropoda</taxon>
        <taxon>Coelurosauria</taxon>
        <taxon>Aves</taxon>
        <taxon>Neognathae</taxon>
        <taxon>Galloanserae</taxon>
        <taxon>Galliformes</taxon>
        <taxon>Phasianidae</taxon>
        <taxon>Phasianinae</taxon>
        <taxon>Gallus</taxon>
    </lineage>
</organism>
<feature type="chain" id="PRO_0000299461" description="Outer dense fiber protein 2">
    <location>
        <begin position="1"/>
        <end position="822"/>
    </location>
</feature>
<feature type="region of interest" description="Disordered" evidence="4">
    <location>
        <begin position="26"/>
        <end position="45"/>
    </location>
</feature>
<feature type="coiled-coil region" evidence="3">
    <location>
        <begin position="113"/>
        <end position="418"/>
    </location>
</feature>
<feature type="coiled-coil region" evidence="3">
    <location>
        <begin position="452"/>
        <end position="490"/>
    </location>
</feature>
<feature type="coiled-coil region" evidence="3">
    <location>
        <begin position="516"/>
        <end position="796"/>
    </location>
</feature>
<comment type="function">
    <text evidence="2">Seems to be a major component of sperm tail outer dense fibers (ODF). ODFs are filamentous structures located on the outside of the axoneme in the midpiece and principal piece of the mammalian sperm tail and may help to maintain the passive elastic structures and elastic recoil of the sperm tail (By similarity).</text>
</comment>
<comment type="subunit">
    <text evidence="2">Self-associates. Associates with microtubules and forms a fibrillar structure partially linked to the microtubule network (By similarity).</text>
</comment>
<comment type="subcellular location">
    <subcellularLocation>
        <location evidence="1">Cytoplasm</location>
        <location evidence="1">Cytoskeleton</location>
        <location evidence="1">Microtubule organizing center</location>
        <location evidence="1">Centrosome</location>
    </subcellularLocation>
    <subcellularLocation>
        <location evidence="1">Cell projection</location>
        <location evidence="1">Cilium</location>
    </subcellularLocation>
    <subcellularLocation>
        <location evidence="1">Cytoplasm</location>
        <location evidence="1">Cytoskeleton</location>
        <location evidence="1">Microtubule organizing center</location>
        <location evidence="1">Centrosome</location>
        <location evidence="1">Centriole</location>
    </subcellularLocation>
    <subcellularLocation>
        <location evidence="1">Cytoplasm</location>
        <location evidence="1">Cytoskeleton</location>
        <location evidence="1">Spindle pole</location>
    </subcellularLocation>
    <subcellularLocation>
        <location evidence="1">Cell projection</location>
        <location evidence="1">Cilium</location>
        <location evidence="1">Flagellum</location>
    </subcellularLocation>
</comment>
<comment type="similarity">
    <text evidence="5">Belongs to the ODF2 family.</text>
</comment>
<protein>
    <recommendedName>
        <fullName>Outer dense fiber protein 2</fullName>
    </recommendedName>
    <alternativeName>
        <fullName>Cenexin</fullName>
    </alternativeName>
    <alternativeName>
        <fullName>Outer dense fiber of sperm tails protein 2</fullName>
    </alternativeName>
</protein>